<organism>
    <name type="scientific">Escherichia coli (strain K12)</name>
    <dbReference type="NCBI Taxonomy" id="83333"/>
    <lineage>
        <taxon>Bacteria</taxon>
        <taxon>Pseudomonadati</taxon>
        <taxon>Pseudomonadota</taxon>
        <taxon>Gammaproteobacteria</taxon>
        <taxon>Enterobacterales</taxon>
        <taxon>Enterobacteriaceae</taxon>
        <taxon>Escherichia</taxon>
    </lineage>
</organism>
<protein>
    <recommendedName>
        <fullName>Alanine racemase, catabolic</fullName>
        <ecNumber>5.1.1.1</ecNumber>
    </recommendedName>
</protein>
<proteinExistence type="evidence at transcript level"/>
<comment type="function">
    <text evidence="1">Isomerizes L-alanine to D-alanine which is then oxidized to pyruvate by DadA.</text>
</comment>
<comment type="catalytic activity">
    <reaction>
        <text>L-alanine = D-alanine</text>
        <dbReference type="Rhea" id="RHEA:20249"/>
        <dbReference type="ChEBI" id="CHEBI:57416"/>
        <dbReference type="ChEBI" id="CHEBI:57972"/>
        <dbReference type="EC" id="5.1.1.1"/>
    </reaction>
</comment>
<comment type="cofactor">
    <cofactor evidence="1">
        <name>pyridoxal 5'-phosphate</name>
        <dbReference type="ChEBI" id="CHEBI:597326"/>
    </cofactor>
</comment>
<comment type="induction">
    <text evidence="2">By alanine.</text>
</comment>
<comment type="similarity">
    <text evidence="3">Belongs to the alanine racemase family.</text>
</comment>
<reference key="1">
    <citation type="journal article" date="1994" name="J. Bacteriol.">
        <title>Organization and expression of the Escherichia coli K-12 dad operon encoding the smaller subunit of D-amino acid dehydrogenase and the catabolic alanine racemase.</title>
        <authorList>
            <person name="Lobocka M."/>
            <person name="Hennig J."/>
            <person name="Wild J."/>
            <person name="Klopotowski T."/>
        </authorList>
    </citation>
    <scope>NUCLEOTIDE SEQUENCE [GENOMIC DNA]</scope>
    <scope>INDUCTION</scope>
    <source>
        <strain>K12</strain>
    </source>
</reference>
<reference key="2">
    <citation type="journal article" date="1996" name="DNA Res.">
        <title>A 718-kb DNA sequence of the Escherichia coli K-12 genome corresponding to the 12.7-28.0 min region on the linkage map.</title>
        <authorList>
            <person name="Oshima T."/>
            <person name="Aiba H."/>
            <person name="Baba T."/>
            <person name="Fujita K."/>
            <person name="Hayashi K."/>
            <person name="Honjo A."/>
            <person name="Ikemoto K."/>
            <person name="Inada T."/>
            <person name="Itoh T."/>
            <person name="Kajihara M."/>
            <person name="Kanai K."/>
            <person name="Kashimoto K."/>
            <person name="Kimura S."/>
            <person name="Kitagawa M."/>
            <person name="Makino K."/>
            <person name="Masuda S."/>
            <person name="Miki T."/>
            <person name="Mizobuchi K."/>
            <person name="Mori H."/>
            <person name="Motomura K."/>
            <person name="Nakamura Y."/>
            <person name="Nashimoto H."/>
            <person name="Nishio Y."/>
            <person name="Saito N."/>
            <person name="Sampei G."/>
            <person name="Seki Y."/>
            <person name="Tagami H."/>
            <person name="Takemoto K."/>
            <person name="Wada C."/>
            <person name="Yamamoto Y."/>
            <person name="Yano M."/>
            <person name="Horiuchi T."/>
        </authorList>
    </citation>
    <scope>NUCLEOTIDE SEQUENCE [LARGE SCALE GENOMIC DNA]</scope>
    <source>
        <strain>K12 / W3110 / ATCC 27325 / DSM 5911</strain>
    </source>
</reference>
<reference key="3">
    <citation type="journal article" date="1997" name="Science">
        <title>The complete genome sequence of Escherichia coli K-12.</title>
        <authorList>
            <person name="Blattner F.R."/>
            <person name="Plunkett G. III"/>
            <person name="Bloch C.A."/>
            <person name="Perna N.T."/>
            <person name="Burland V."/>
            <person name="Riley M."/>
            <person name="Collado-Vides J."/>
            <person name="Glasner J.D."/>
            <person name="Rode C.K."/>
            <person name="Mayhew G.F."/>
            <person name="Gregor J."/>
            <person name="Davis N.W."/>
            <person name="Kirkpatrick H.A."/>
            <person name="Goeden M.A."/>
            <person name="Rose D.J."/>
            <person name="Mau B."/>
            <person name="Shao Y."/>
        </authorList>
    </citation>
    <scope>NUCLEOTIDE SEQUENCE [LARGE SCALE GENOMIC DNA]</scope>
    <source>
        <strain>K12 / MG1655 / ATCC 47076</strain>
    </source>
</reference>
<reference key="4">
    <citation type="journal article" date="2006" name="Mol. Syst. Biol.">
        <title>Highly accurate genome sequences of Escherichia coli K-12 strains MG1655 and W3110.</title>
        <authorList>
            <person name="Hayashi K."/>
            <person name="Morooka N."/>
            <person name="Yamamoto Y."/>
            <person name="Fujita K."/>
            <person name="Isono K."/>
            <person name="Choi S."/>
            <person name="Ohtsubo E."/>
            <person name="Baba T."/>
            <person name="Wanner B.L."/>
            <person name="Mori H."/>
            <person name="Horiuchi T."/>
        </authorList>
    </citation>
    <scope>NUCLEOTIDE SEQUENCE [LARGE SCALE GENOMIC DNA]</scope>
    <source>
        <strain>K12 / W3110 / ATCC 27325 / DSM 5911</strain>
    </source>
</reference>
<accession>P29012</accession>
<accession>O87498</accession>
<accession>P78246</accession>
<keyword id="KW-0413">Isomerase</keyword>
<keyword id="KW-0663">Pyridoxal phosphate</keyword>
<keyword id="KW-1185">Reference proteome</keyword>
<name>ALR2_ECOLI</name>
<gene>
    <name type="primary">dadX</name>
    <name type="synonym">alnB</name>
    <name type="synonym">dadB</name>
    <name type="ordered locus">b1190</name>
    <name type="ordered locus">JW1179</name>
</gene>
<evidence type="ECO:0000250" key="1"/>
<evidence type="ECO:0000269" key="2">
    <source>
    </source>
</evidence>
<evidence type="ECO:0000305" key="3"/>
<sequence>MTRPIQASLDLQALKQNLSIVRQAATHARVWSVVKANAYGHGIERIWSAIGATDGFALLNLEEAITLRERGWKGPILMLEGFFHAQDLEIYDQHRLTTCVHSNWQLKALQNARLKAPLDIYLKVNSGMNRLGFQPDRVLTVWQQLRAMANVGEMTLMSHFAEAEHPDGISGAMARIEQAAEGLECRRSLSNSAATLWHPEAHFDWVRPGIILYGASPSGQWRDIANTGLRPVMTLSSEIIGVQTLKAGERVGYGGRYTARDEQRIGIVAAGYADGYPRHAPTGTPVLVDGVRTMTVGTVSMDMLAVDLTPCPQAGIGTPVELWGKEIKIDDVAAAAGTVGYELMCALALRVPVVTV</sequence>
<feature type="chain" id="PRO_0000114517" description="Alanine racemase, catabolic">
    <location>
        <begin position="1"/>
        <end position="356"/>
    </location>
</feature>
<feature type="active site" description="Proton acceptor; specific for D-alanine" evidence="1">
    <location>
        <position position="35"/>
    </location>
</feature>
<feature type="active site" description="Proton acceptor; specific for L-alanine" evidence="1">
    <location>
        <position position="253"/>
    </location>
</feature>
<feature type="binding site" evidence="1">
    <location>
        <position position="130"/>
    </location>
    <ligand>
        <name>substrate</name>
    </ligand>
</feature>
<feature type="binding site" evidence="1">
    <location>
        <position position="301"/>
    </location>
    <ligand>
        <name>substrate</name>
    </ligand>
</feature>
<feature type="modified residue" description="N6-(pyridoxal phosphate)lysine" evidence="1">
    <location>
        <position position="35"/>
    </location>
</feature>
<feature type="sequence conflict" description="In Ref. 1; AAC36881." evidence="3" ref="1">
    <original>A</original>
    <variation>R</variation>
    <location>
        <position position="172"/>
    </location>
</feature>
<feature type="sequence conflict" description="In Ref. 1; AAC36881." evidence="3" ref="1">
    <original>A</original>
    <variation>R</variation>
    <location>
        <position position="215"/>
    </location>
</feature>
<feature type="sequence conflict" description="In Ref. 1; AAC36881." evidence="3" ref="1">
    <original>P</original>
    <variation>L</variation>
    <location>
        <position position="281"/>
    </location>
</feature>
<feature type="sequence conflict" description="In Ref. 1; AAC36881." evidence="3" ref="1">
    <original>L</original>
    <variation>V</variation>
    <location>
        <position position="349"/>
    </location>
</feature>
<dbReference type="EC" id="5.1.1.1"/>
<dbReference type="EMBL" id="L02948">
    <property type="protein sequence ID" value="AAC36881.1"/>
    <property type="molecule type" value="Unassigned_DNA"/>
</dbReference>
<dbReference type="EMBL" id="U00096">
    <property type="protein sequence ID" value="AAC74274.1"/>
    <property type="molecule type" value="Genomic_DNA"/>
</dbReference>
<dbReference type="EMBL" id="AP009048">
    <property type="protein sequence ID" value="BAA36045.1"/>
    <property type="molecule type" value="Genomic_DNA"/>
</dbReference>
<dbReference type="PIR" id="C64865">
    <property type="entry name" value="C53383"/>
</dbReference>
<dbReference type="RefSeq" id="NP_415708.1">
    <property type="nucleotide sequence ID" value="NC_000913.3"/>
</dbReference>
<dbReference type="RefSeq" id="WP_000197881.1">
    <property type="nucleotide sequence ID" value="NZ_SSZK01000010.1"/>
</dbReference>
<dbReference type="SMR" id="P29012"/>
<dbReference type="BioGRID" id="4260105">
    <property type="interactions" value="650"/>
</dbReference>
<dbReference type="DIP" id="DIP-9395N"/>
<dbReference type="FunCoup" id="P29012">
    <property type="interactions" value="361"/>
</dbReference>
<dbReference type="IntAct" id="P29012">
    <property type="interactions" value="2"/>
</dbReference>
<dbReference type="STRING" id="511145.b1190"/>
<dbReference type="jPOST" id="P29012"/>
<dbReference type="PaxDb" id="511145-b1190"/>
<dbReference type="EnsemblBacteria" id="AAC74274">
    <property type="protein sequence ID" value="AAC74274"/>
    <property type="gene ID" value="b1190"/>
</dbReference>
<dbReference type="GeneID" id="945754"/>
<dbReference type="KEGG" id="ecj:JW1179"/>
<dbReference type="KEGG" id="eco:b1190"/>
<dbReference type="KEGG" id="ecoc:C3026_07005"/>
<dbReference type="PATRIC" id="fig|1411691.4.peg.1097"/>
<dbReference type="EchoBASE" id="EB1380"/>
<dbReference type="eggNOG" id="COG0787">
    <property type="taxonomic scope" value="Bacteria"/>
</dbReference>
<dbReference type="HOGENOM" id="CLU_028393_1_0_6"/>
<dbReference type="InParanoid" id="P29012"/>
<dbReference type="OMA" id="HMTHFSD"/>
<dbReference type="OrthoDB" id="9813814at2"/>
<dbReference type="PhylomeDB" id="P29012"/>
<dbReference type="BioCyc" id="EcoCyc:ALARACECAT-MONOMER"/>
<dbReference type="BioCyc" id="MetaCyc:ALARACECAT-MONOMER"/>
<dbReference type="SABIO-RK" id="P29012"/>
<dbReference type="PRO" id="PR:P29012"/>
<dbReference type="Proteomes" id="UP000000625">
    <property type="component" value="Chromosome"/>
</dbReference>
<dbReference type="GO" id="GO:0005829">
    <property type="term" value="C:cytosol"/>
    <property type="evidence" value="ECO:0000314"/>
    <property type="project" value="EcoCyc"/>
</dbReference>
<dbReference type="GO" id="GO:0008784">
    <property type="term" value="F:alanine racemase activity"/>
    <property type="evidence" value="ECO:0000314"/>
    <property type="project" value="EcoCyc"/>
</dbReference>
<dbReference type="GO" id="GO:0042803">
    <property type="term" value="F:protein homodimerization activity"/>
    <property type="evidence" value="ECO:0000269"/>
    <property type="project" value="EcoCyc"/>
</dbReference>
<dbReference type="GO" id="GO:0030170">
    <property type="term" value="F:pyridoxal phosphate binding"/>
    <property type="evidence" value="ECO:0000318"/>
    <property type="project" value="GO_Central"/>
</dbReference>
<dbReference type="GO" id="GO:0030632">
    <property type="term" value="P:D-alanine biosynthetic process"/>
    <property type="evidence" value="ECO:0000318"/>
    <property type="project" value="GO_Central"/>
</dbReference>
<dbReference type="GO" id="GO:0019480">
    <property type="term" value="P:L-alanine oxidation to pyruvate via D-alanine"/>
    <property type="evidence" value="ECO:0000315"/>
    <property type="project" value="EcoCyc"/>
</dbReference>
<dbReference type="CDD" id="cd06827">
    <property type="entry name" value="PLPDE_III_AR_proteobact"/>
    <property type="match status" value="1"/>
</dbReference>
<dbReference type="FunFam" id="2.40.37.10:FF:000002">
    <property type="entry name" value="Alanine racemase"/>
    <property type="match status" value="1"/>
</dbReference>
<dbReference type="FunFam" id="3.20.20.10:FF:000002">
    <property type="entry name" value="Alanine racemase"/>
    <property type="match status" value="1"/>
</dbReference>
<dbReference type="Gene3D" id="3.20.20.10">
    <property type="entry name" value="Alanine racemase"/>
    <property type="match status" value="1"/>
</dbReference>
<dbReference type="Gene3D" id="2.40.37.10">
    <property type="entry name" value="Lyase, Ornithine Decarboxylase, Chain A, domain 1"/>
    <property type="match status" value="1"/>
</dbReference>
<dbReference type="HAMAP" id="MF_01201">
    <property type="entry name" value="Ala_racemase"/>
    <property type="match status" value="1"/>
</dbReference>
<dbReference type="InterPro" id="IPR000821">
    <property type="entry name" value="Ala_racemase"/>
</dbReference>
<dbReference type="InterPro" id="IPR009006">
    <property type="entry name" value="Ala_racemase/Decarboxylase_C"/>
</dbReference>
<dbReference type="InterPro" id="IPR011079">
    <property type="entry name" value="Ala_racemase_C"/>
</dbReference>
<dbReference type="InterPro" id="IPR001608">
    <property type="entry name" value="Ala_racemase_N"/>
</dbReference>
<dbReference type="InterPro" id="IPR020622">
    <property type="entry name" value="Ala_racemase_pyridoxalP-BS"/>
</dbReference>
<dbReference type="InterPro" id="IPR029066">
    <property type="entry name" value="PLP-binding_barrel"/>
</dbReference>
<dbReference type="NCBIfam" id="TIGR00492">
    <property type="entry name" value="alr"/>
    <property type="match status" value="1"/>
</dbReference>
<dbReference type="NCBIfam" id="NF002970">
    <property type="entry name" value="PRK03646.1"/>
    <property type="match status" value="1"/>
</dbReference>
<dbReference type="PANTHER" id="PTHR30511">
    <property type="entry name" value="ALANINE RACEMASE"/>
    <property type="match status" value="1"/>
</dbReference>
<dbReference type="PANTHER" id="PTHR30511:SF0">
    <property type="entry name" value="ALANINE RACEMASE, CATABOLIC-RELATED"/>
    <property type="match status" value="1"/>
</dbReference>
<dbReference type="Pfam" id="PF00842">
    <property type="entry name" value="Ala_racemase_C"/>
    <property type="match status" value="1"/>
</dbReference>
<dbReference type="Pfam" id="PF01168">
    <property type="entry name" value="Ala_racemase_N"/>
    <property type="match status" value="1"/>
</dbReference>
<dbReference type="PRINTS" id="PR00992">
    <property type="entry name" value="ALARACEMASE"/>
</dbReference>
<dbReference type="SMART" id="SM01005">
    <property type="entry name" value="Ala_racemase_C"/>
    <property type="match status" value="1"/>
</dbReference>
<dbReference type="SUPFAM" id="SSF50621">
    <property type="entry name" value="Alanine racemase C-terminal domain-like"/>
    <property type="match status" value="1"/>
</dbReference>
<dbReference type="SUPFAM" id="SSF51419">
    <property type="entry name" value="PLP-binding barrel"/>
    <property type="match status" value="1"/>
</dbReference>
<dbReference type="PROSITE" id="PS00395">
    <property type="entry name" value="ALANINE_RACEMASE"/>
    <property type="match status" value="1"/>
</dbReference>